<feature type="chain" id="PRO_1000048463" description="Light-independent protochlorophyllide reductase iron-sulfur ATP-binding protein">
    <location>
        <begin position="1"/>
        <end position="275"/>
    </location>
</feature>
<feature type="binding site" evidence="1">
    <location>
        <begin position="12"/>
        <end position="17"/>
    </location>
    <ligand>
        <name>ATP</name>
        <dbReference type="ChEBI" id="CHEBI:30616"/>
    </ligand>
</feature>
<feature type="binding site" evidence="1">
    <location>
        <position position="16"/>
    </location>
    <ligand>
        <name>Mg(2+)</name>
        <dbReference type="ChEBI" id="CHEBI:18420"/>
    </ligand>
</feature>
<feature type="binding site" evidence="1">
    <location>
        <position position="41"/>
    </location>
    <ligand>
        <name>ATP</name>
        <dbReference type="ChEBI" id="CHEBI:30616"/>
    </ligand>
</feature>
<feature type="binding site" evidence="1">
    <location>
        <position position="97"/>
    </location>
    <ligand>
        <name>[4Fe-4S] cluster</name>
        <dbReference type="ChEBI" id="CHEBI:49883"/>
        <note>ligand shared between dimeric partners</note>
    </ligand>
</feature>
<feature type="binding site" evidence="1">
    <location>
        <position position="131"/>
    </location>
    <ligand>
        <name>[4Fe-4S] cluster</name>
        <dbReference type="ChEBI" id="CHEBI:49883"/>
        <note>ligand shared between dimeric partners</note>
    </ligand>
</feature>
<feature type="binding site" evidence="1">
    <location>
        <begin position="182"/>
        <end position="183"/>
    </location>
    <ligand>
        <name>ATP</name>
        <dbReference type="ChEBI" id="CHEBI:30616"/>
    </ligand>
</feature>
<organism>
    <name type="scientific">Chlorobium phaeobacteroides (strain DSM 266 / SMG 266 / 2430)</name>
    <dbReference type="NCBI Taxonomy" id="290317"/>
    <lineage>
        <taxon>Bacteria</taxon>
        <taxon>Pseudomonadati</taxon>
        <taxon>Chlorobiota</taxon>
        <taxon>Chlorobiia</taxon>
        <taxon>Chlorobiales</taxon>
        <taxon>Chlorobiaceae</taxon>
        <taxon>Chlorobium/Pelodictyon group</taxon>
        <taxon>Chlorobium</taxon>
    </lineage>
</organism>
<evidence type="ECO:0000255" key="1">
    <source>
        <dbReference type="HAMAP-Rule" id="MF_00355"/>
    </source>
</evidence>
<proteinExistence type="inferred from homology"/>
<dbReference type="EC" id="1.3.7.7" evidence="1"/>
<dbReference type="EMBL" id="CP000492">
    <property type="protein sequence ID" value="ABL66374.1"/>
    <property type="molecule type" value="Genomic_DNA"/>
</dbReference>
<dbReference type="RefSeq" id="WP_011746157.1">
    <property type="nucleotide sequence ID" value="NC_008639.1"/>
</dbReference>
<dbReference type="SMR" id="A1BIZ7"/>
<dbReference type="STRING" id="290317.Cpha266_2386"/>
<dbReference type="KEGG" id="cph:Cpha266_2386"/>
<dbReference type="eggNOG" id="COG1348">
    <property type="taxonomic scope" value="Bacteria"/>
</dbReference>
<dbReference type="HOGENOM" id="CLU_059373_2_0_10"/>
<dbReference type="OrthoDB" id="9778641at2"/>
<dbReference type="UniPathway" id="UPA00671"/>
<dbReference type="Proteomes" id="UP000008701">
    <property type="component" value="Chromosome"/>
</dbReference>
<dbReference type="GO" id="GO:0051539">
    <property type="term" value="F:4 iron, 4 sulfur cluster binding"/>
    <property type="evidence" value="ECO:0007669"/>
    <property type="project" value="UniProtKB-UniRule"/>
</dbReference>
<dbReference type="GO" id="GO:0005524">
    <property type="term" value="F:ATP binding"/>
    <property type="evidence" value="ECO:0007669"/>
    <property type="project" value="UniProtKB-UniRule"/>
</dbReference>
<dbReference type="GO" id="GO:0046872">
    <property type="term" value="F:metal ion binding"/>
    <property type="evidence" value="ECO:0007669"/>
    <property type="project" value="UniProtKB-KW"/>
</dbReference>
<dbReference type="GO" id="GO:0016730">
    <property type="term" value="F:oxidoreductase activity, acting on iron-sulfur proteins as donors"/>
    <property type="evidence" value="ECO:0007669"/>
    <property type="project" value="InterPro"/>
</dbReference>
<dbReference type="GO" id="GO:0016636">
    <property type="term" value="F:oxidoreductase activity, acting on the CH-CH group of donors, iron-sulfur protein as acceptor"/>
    <property type="evidence" value="ECO:0007669"/>
    <property type="project" value="UniProtKB-UniRule"/>
</dbReference>
<dbReference type="GO" id="GO:0036070">
    <property type="term" value="P:light-independent bacteriochlorophyll biosynthetic process"/>
    <property type="evidence" value="ECO:0007669"/>
    <property type="project" value="UniProtKB-UniRule"/>
</dbReference>
<dbReference type="GO" id="GO:0019685">
    <property type="term" value="P:photosynthesis, dark reaction"/>
    <property type="evidence" value="ECO:0007669"/>
    <property type="project" value="InterPro"/>
</dbReference>
<dbReference type="Gene3D" id="3.40.50.300">
    <property type="entry name" value="P-loop containing nucleotide triphosphate hydrolases"/>
    <property type="match status" value="1"/>
</dbReference>
<dbReference type="HAMAP" id="MF_00355">
    <property type="entry name" value="ChlL_BchL"/>
    <property type="match status" value="1"/>
</dbReference>
<dbReference type="InterPro" id="IPR030655">
    <property type="entry name" value="NifH/chlL_CS"/>
</dbReference>
<dbReference type="InterPro" id="IPR000392">
    <property type="entry name" value="NifH/frxC"/>
</dbReference>
<dbReference type="InterPro" id="IPR027417">
    <property type="entry name" value="P-loop_NTPase"/>
</dbReference>
<dbReference type="InterPro" id="IPR005971">
    <property type="entry name" value="Protochlorophyllide_ATP-bd"/>
</dbReference>
<dbReference type="NCBIfam" id="TIGR01281">
    <property type="entry name" value="DPOR_bchL"/>
    <property type="match status" value="1"/>
</dbReference>
<dbReference type="PANTHER" id="PTHR42864">
    <property type="entry name" value="LIGHT-INDEPENDENT PROTOCHLOROPHYLLIDE REDUCTASE IRON-SULFUR ATP-BINDING PROTEIN"/>
    <property type="match status" value="1"/>
</dbReference>
<dbReference type="PANTHER" id="PTHR42864:SF2">
    <property type="entry name" value="LIGHT-INDEPENDENT PROTOCHLOROPHYLLIDE REDUCTASE IRON-SULFUR ATP-BINDING PROTEIN"/>
    <property type="match status" value="1"/>
</dbReference>
<dbReference type="Pfam" id="PF00142">
    <property type="entry name" value="Fer4_NifH"/>
    <property type="match status" value="1"/>
</dbReference>
<dbReference type="PIRSF" id="PIRSF000363">
    <property type="entry name" value="Nitrogenase_iron"/>
    <property type="match status" value="1"/>
</dbReference>
<dbReference type="PRINTS" id="PR00091">
    <property type="entry name" value="NITROGNASEII"/>
</dbReference>
<dbReference type="SUPFAM" id="SSF52540">
    <property type="entry name" value="P-loop containing nucleoside triphosphate hydrolases"/>
    <property type="match status" value="1"/>
</dbReference>
<dbReference type="PROSITE" id="PS00746">
    <property type="entry name" value="NIFH_FRXC_1"/>
    <property type="match status" value="1"/>
</dbReference>
<dbReference type="PROSITE" id="PS00692">
    <property type="entry name" value="NIFH_FRXC_2"/>
    <property type="match status" value="1"/>
</dbReference>
<dbReference type="PROSITE" id="PS51026">
    <property type="entry name" value="NIFH_FRXC_3"/>
    <property type="match status" value="1"/>
</dbReference>
<accession>A1BIZ7</accession>
<keyword id="KW-0004">4Fe-4S</keyword>
<keyword id="KW-0067">ATP-binding</keyword>
<keyword id="KW-0077">Bacteriochlorophyll biosynthesis</keyword>
<keyword id="KW-0149">Chlorophyll biosynthesis</keyword>
<keyword id="KW-0408">Iron</keyword>
<keyword id="KW-0411">Iron-sulfur</keyword>
<keyword id="KW-0460">Magnesium</keyword>
<keyword id="KW-0479">Metal-binding</keyword>
<keyword id="KW-0547">Nucleotide-binding</keyword>
<keyword id="KW-0560">Oxidoreductase</keyword>
<keyword id="KW-0602">Photosynthesis</keyword>
<keyword id="KW-1185">Reference proteome</keyword>
<comment type="function">
    <text evidence="1">Component of the dark-operative protochlorophyllide reductase (DPOR) that uses Mg-ATP and reduced ferredoxin to reduce ring D of protochlorophyllide (Pchlide) to form chlorophyllide a (Chlide). This reaction is light-independent. The L component serves as a unique electron donor to the NB-component of the complex, and binds Mg-ATP.</text>
</comment>
<comment type="catalytic activity">
    <reaction evidence="1">
        <text>chlorophyllide a + oxidized 2[4Fe-4S]-[ferredoxin] + 2 ADP + 2 phosphate = protochlorophyllide a + reduced 2[4Fe-4S]-[ferredoxin] + 2 ATP + 2 H2O</text>
        <dbReference type="Rhea" id="RHEA:28202"/>
        <dbReference type="Rhea" id="RHEA-COMP:10002"/>
        <dbReference type="Rhea" id="RHEA-COMP:10004"/>
        <dbReference type="ChEBI" id="CHEBI:15377"/>
        <dbReference type="ChEBI" id="CHEBI:30616"/>
        <dbReference type="ChEBI" id="CHEBI:33722"/>
        <dbReference type="ChEBI" id="CHEBI:33723"/>
        <dbReference type="ChEBI" id="CHEBI:43474"/>
        <dbReference type="ChEBI" id="CHEBI:83348"/>
        <dbReference type="ChEBI" id="CHEBI:83350"/>
        <dbReference type="ChEBI" id="CHEBI:456216"/>
        <dbReference type="EC" id="1.3.7.7"/>
    </reaction>
</comment>
<comment type="cofactor">
    <cofactor evidence="1">
        <name>[4Fe-4S] cluster</name>
        <dbReference type="ChEBI" id="CHEBI:49883"/>
    </cofactor>
    <text evidence="1">Binds 1 [4Fe-4S] cluster per dimer.</text>
</comment>
<comment type="pathway">
    <text evidence="1">Porphyrin-containing compound metabolism; bacteriochlorophyll biosynthesis (light-independent).</text>
</comment>
<comment type="subunit">
    <text evidence="1">Homodimer. Protochlorophyllide reductase is composed of three subunits; BchL, BchN and BchB.</text>
</comment>
<comment type="similarity">
    <text evidence="1">Belongs to the NifH/BchL/ChlL family.</text>
</comment>
<name>BCHL_CHLPD</name>
<reference key="1">
    <citation type="submission" date="2006-12" db="EMBL/GenBank/DDBJ databases">
        <title>Complete sequence of Chlorobium phaeobacteroides DSM 266.</title>
        <authorList>
            <consortium name="US DOE Joint Genome Institute"/>
            <person name="Copeland A."/>
            <person name="Lucas S."/>
            <person name="Lapidus A."/>
            <person name="Barry K."/>
            <person name="Detter J.C."/>
            <person name="Glavina del Rio T."/>
            <person name="Hammon N."/>
            <person name="Israni S."/>
            <person name="Pitluck S."/>
            <person name="Goltsman E."/>
            <person name="Schmutz J."/>
            <person name="Larimer F."/>
            <person name="Land M."/>
            <person name="Hauser L."/>
            <person name="Mikhailova N."/>
            <person name="Li T."/>
            <person name="Overmann J."/>
            <person name="Bryant D.A."/>
            <person name="Richardson P."/>
        </authorList>
    </citation>
    <scope>NUCLEOTIDE SEQUENCE [LARGE SCALE GENOMIC DNA]</scope>
    <source>
        <strain>DSM 266 / SMG 266 / 2430</strain>
    </source>
</reference>
<gene>
    <name evidence="1" type="primary">bchL</name>
    <name type="ordered locus">Cpha266_2386</name>
</gene>
<sequence>MSLVLAVYGKGGIGKSTTSANISAALALKGAKVLQIGCDPKHDSTFPITGKLQKTVIEALEEVDFHHEELGAEDIIETGFAGIDCLEAGGPPAGSGCGGYVVGESVTLLQELGLYDKYDVILFDVLGDVVCGGFSAPLNYADYAIIIATNDFDSIFAANRLCMAIQQKSVRYKVKLAGIVANRVDYTTGGGTNMLDQFAEKVGTRLLAKVPYHELIRKSRFAGKTLFAMEDTPGKDDCLIPYNEIADFLIQENPLASVPVPIGDREIFDMVGGWQ</sequence>
<protein>
    <recommendedName>
        <fullName evidence="1">Light-independent protochlorophyllide reductase iron-sulfur ATP-binding protein</fullName>
        <shortName evidence="1">DPOR subunit L</shortName>
        <shortName evidence="1">LI-POR subunit L</shortName>
        <ecNumber evidence="1">1.3.7.7</ecNumber>
    </recommendedName>
</protein>